<name>NUON_LEPBA</name>
<sequence>MSYTPSSNDLIAISPMLILCGVALLSLVVQFLIPEEDEGKPLWVLSILGILVAMYALYHTTNSPGYGKFFGSQISISPLTVWLSAIYLIAGLITLLVAPPFLSQHKTLFPEFFPLMLFCLSGMMFLTSGYDLIVIFVGLEILSLSLYVMIGMARTSVSALESAMKYFLLGTFSSGFMLLGIAFLYGGSGTTNLDGALRGLSLKGYEANFSKLGLGLFFVGVSFKAALVPFHSWTPDVYEGAQTPITGFMASAGKASALGLVIILFNHIPMGEMGNVWKYLMGTIALISMTWGNIVALKQDNLKRMLAYSSISHAGYIVAGIACGAGLEALYYLFSYSLLNLAAFAIISYLEQGKHEVTVNGISHLSGEHPFTALALSLVFLSFAGFPPLIGFWTKLFLLQKMAESDLFFHRVLLFGAVANSCIAFYYYMKITIQSYMKQETGVVAGARDLPSLPTLGFLIFLLCVFFTAGWIFFQPGSLL</sequence>
<gene>
    <name evidence="1" type="primary">nuoN</name>
    <name type="ordered locus">LBF_1253</name>
</gene>
<organism>
    <name type="scientific">Leptospira biflexa serovar Patoc (strain Patoc 1 / Ames)</name>
    <dbReference type="NCBI Taxonomy" id="355278"/>
    <lineage>
        <taxon>Bacteria</taxon>
        <taxon>Pseudomonadati</taxon>
        <taxon>Spirochaetota</taxon>
        <taxon>Spirochaetia</taxon>
        <taxon>Leptospirales</taxon>
        <taxon>Leptospiraceae</taxon>
        <taxon>Leptospira</taxon>
    </lineage>
</organism>
<protein>
    <recommendedName>
        <fullName evidence="1">NADH-quinone oxidoreductase subunit N</fullName>
        <ecNumber evidence="1">7.1.1.-</ecNumber>
    </recommendedName>
    <alternativeName>
        <fullName evidence="1">NADH dehydrogenase I subunit N</fullName>
    </alternativeName>
    <alternativeName>
        <fullName evidence="1">NDH-1 subunit N</fullName>
    </alternativeName>
</protein>
<feature type="chain" id="PRO_0000391172" description="NADH-quinone oxidoreductase subunit N">
    <location>
        <begin position="1"/>
        <end position="480"/>
    </location>
</feature>
<feature type="transmembrane region" description="Helical" evidence="1">
    <location>
        <begin position="13"/>
        <end position="33"/>
    </location>
</feature>
<feature type="transmembrane region" description="Helical" evidence="1">
    <location>
        <begin position="41"/>
        <end position="61"/>
    </location>
</feature>
<feature type="transmembrane region" description="Helical" evidence="1">
    <location>
        <begin position="81"/>
        <end position="101"/>
    </location>
</feature>
<feature type="transmembrane region" description="Helical" evidence="1">
    <location>
        <begin position="107"/>
        <end position="127"/>
    </location>
</feature>
<feature type="transmembrane region" description="Helical" evidence="1">
    <location>
        <begin position="132"/>
        <end position="152"/>
    </location>
</feature>
<feature type="transmembrane region" description="Helical" evidence="1">
    <location>
        <begin position="167"/>
        <end position="187"/>
    </location>
</feature>
<feature type="transmembrane region" description="Helical" evidence="1">
    <location>
        <begin position="212"/>
        <end position="232"/>
    </location>
</feature>
<feature type="transmembrane region" description="Helical" evidence="1">
    <location>
        <begin position="245"/>
        <end position="265"/>
    </location>
</feature>
<feature type="transmembrane region" description="Helical" evidence="1">
    <location>
        <begin position="276"/>
        <end position="296"/>
    </location>
</feature>
<feature type="transmembrane region" description="Helical" evidence="1">
    <location>
        <begin position="314"/>
        <end position="334"/>
    </location>
</feature>
<feature type="transmembrane region" description="Helical" evidence="1">
    <location>
        <begin position="373"/>
        <end position="393"/>
    </location>
</feature>
<feature type="transmembrane region" description="Helical" evidence="1">
    <location>
        <begin position="413"/>
        <end position="433"/>
    </location>
</feature>
<feature type="transmembrane region" description="Helical" evidence="1">
    <location>
        <begin position="454"/>
        <end position="474"/>
    </location>
</feature>
<proteinExistence type="inferred from homology"/>
<dbReference type="EC" id="7.1.1.-" evidence="1"/>
<dbReference type="EMBL" id="CP000777">
    <property type="protein sequence ID" value="ABZ93775.1"/>
    <property type="molecule type" value="Genomic_DNA"/>
</dbReference>
<dbReference type="RefSeq" id="WP_012388298.1">
    <property type="nucleotide sequence ID" value="NC_010842.1"/>
</dbReference>
<dbReference type="SMR" id="B0SFU5"/>
<dbReference type="KEGG" id="lbf:LBF_1253"/>
<dbReference type="HOGENOM" id="CLU_007100_1_5_12"/>
<dbReference type="GO" id="GO:0005886">
    <property type="term" value="C:plasma membrane"/>
    <property type="evidence" value="ECO:0007669"/>
    <property type="project" value="UniProtKB-SubCell"/>
</dbReference>
<dbReference type="GO" id="GO:0008137">
    <property type="term" value="F:NADH dehydrogenase (ubiquinone) activity"/>
    <property type="evidence" value="ECO:0007669"/>
    <property type="project" value="InterPro"/>
</dbReference>
<dbReference type="GO" id="GO:0050136">
    <property type="term" value="F:NADH:ubiquinone reductase (non-electrogenic) activity"/>
    <property type="evidence" value="ECO:0007669"/>
    <property type="project" value="UniProtKB-UniRule"/>
</dbReference>
<dbReference type="GO" id="GO:0048038">
    <property type="term" value="F:quinone binding"/>
    <property type="evidence" value="ECO:0007669"/>
    <property type="project" value="UniProtKB-KW"/>
</dbReference>
<dbReference type="GO" id="GO:0042773">
    <property type="term" value="P:ATP synthesis coupled electron transport"/>
    <property type="evidence" value="ECO:0007669"/>
    <property type="project" value="InterPro"/>
</dbReference>
<dbReference type="HAMAP" id="MF_00445">
    <property type="entry name" value="NDH1_NuoN_1"/>
    <property type="match status" value="1"/>
</dbReference>
<dbReference type="InterPro" id="IPR010096">
    <property type="entry name" value="NADH-Q_OxRdtase_suN/2"/>
</dbReference>
<dbReference type="InterPro" id="IPR001750">
    <property type="entry name" value="ND/Mrp_TM"/>
</dbReference>
<dbReference type="NCBIfam" id="TIGR01770">
    <property type="entry name" value="NDH_I_N"/>
    <property type="match status" value="1"/>
</dbReference>
<dbReference type="PANTHER" id="PTHR22773">
    <property type="entry name" value="NADH DEHYDROGENASE"/>
    <property type="match status" value="1"/>
</dbReference>
<dbReference type="Pfam" id="PF00361">
    <property type="entry name" value="Proton_antipo_M"/>
    <property type="match status" value="1"/>
</dbReference>
<keyword id="KW-0997">Cell inner membrane</keyword>
<keyword id="KW-1003">Cell membrane</keyword>
<keyword id="KW-0472">Membrane</keyword>
<keyword id="KW-0520">NAD</keyword>
<keyword id="KW-0874">Quinone</keyword>
<keyword id="KW-1278">Translocase</keyword>
<keyword id="KW-0812">Transmembrane</keyword>
<keyword id="KW-1133">Transmembrane helix</keyword>
<keyword id="KW-0813">Transport</keyword>
<keyword id="KW-0830">Ubiquinone</keyword>
<accession>B0SFU5</accession>
<evidence type="ECO:0000255" key="1">
    <source>
        <dbReference type="HAMAP-Rule" id="MF_00445"/>
    </source>
</evidence>
<reference key="1">
    <citation type="journal article" date="2008" name="PLoS ONE">
        <title>Genome sequence of the saprophyte Leptospira biflexa provides insights into the evolution of Leptospira and the pathogenesis of leptospirosis.</title>
        <authorList>
            <person name="Picardeau M."/>
            <person name="Bulach D.M."/>
            <person name="Bouchier C."/>
            <person name="Zuerner R.L."/>
            <person name="Zidane N."/>
            <person name="Wilson P.J."/>
            <person name="Creno S."/>
            <person name="Kuczek E.S."/>
            <person name="Bommezzadri S."/>
            <person name="Davis J.C."/>
            <person name="McGrath A."/>
            <person name="Johnson M.J."/>
            <person name="Boursaux-Eude C."/>
            <person name="Seemann T."/>
            <person name="Rouy Z."/>
            <person name="Coppel R.L."/>
            <person name="Rood J.I."/>
            <person name="Lajus A."/>
            <person name="Davies J.K."/>
            <person name="Medigue C."/>
            <person name="Adler B."/>
        </authorList>
    </citation>
    <scope>NUCLEOTIDE SEQUENCE [LARGE SCALE GENOMIC DNA]</scope>
    <source>
        <strain>Patoc 1 / Ames</strain>
    </source>
</reference>
<comment type="function">
    <text evidence="1">NDH-1 shuttles electrons from NADH, via FMN and iron-sulfur (Fe-S) centers, to quinones in the respiratory chain. The immediate electron acceptor for the enzyme in this species is believed to be ubiquinone. Couples the redox reaction to proton translocation (for every two electrons transferred, four hydrogen ions are translocated across the cytoplasmic membrane), and thus conserves the redox energy in a proton gradient.</text>
</comment>
<comment type="catalytic activity">
    <reaction evidence="1">
        <text>a quinone + NADH + 5 H(+)(in) = a quinol + NAD(+) + 4 H(+)(out)</text>
        <dbReference type="Rhea" id="RHEA:57888"/>
        <dbReference type="ChEBI" id="CHEBI:15378"/>
        <dbReference type="ChEBI" id="CHEBI:24646"/>
        <dbReference type="ChEBI" id="CHEBI:57540"/>
        <dbReference type="ChEBI" id="CHEBI:57945"/>
        <dbReference type="ChEBI" id="CHEBI:132124"/>
    </reaction>
</comment>
<comment type="subunit">
    <text evidence="1">NDH-1 is composed of 14 different subunits. Subunits NuoA, H, J, K, L, M, N constitute the membrane sector of the complex.</text>
</comment>
<comment type="subcellular location">
    <subcellularLocation>
        <location evidence="1">Cell inner membrane</location>
        <topology evidence="1">Multi-pass membrane protein</topology>
    </subcellularLocation>
</comment>
<comment type="similarity">
    <text evidence="1">Belongs to the complex I subunit 2 family.</text>
</comment>